<name>RL29_STRT1</name>
<feature type="chain" id="PRO_0000130474" description="Large ribosomal subunit protein uL29">
    <location>
        <begin position="1"/>
        <end position="68"/>
    </location>
</feature>
<dbReference type="EMBL" id="CP000024">
    <property type="protein sequence ID" value="AAV63439.1"/>
    <property type="molecule type" value="Genomic_DNA"/>
</dbReference>
<dbReference type="RefSeq" id="WP_002952156.1">
    <property type="nucleotide sequence ID" value="NC_006449.1"/>
</dbReference>
<dbReference type="SMR" id="Q5LXR9"/>
<dbReference type="GeneID" id="66899654"/>
<dbReference type="KEGG" id="stc:str1926"/>
<dbReference type="HOGENOM" id="CLU_158491_5_2_9"/>
<dbReference type="GO" id="GO:0022625">
    <property type="term" value="C:cytosolic large ribosomal subunit"/>
    <property type="evidence" value="ECO:0007669"/>
    <property type="project" value="TreeGrafter"/>
</dbReference>
<dbReference type="GO" id="GO:0003735">
    <property type="term" value="F:structural constituent of ribosome"/>
    <property type="evidence" value="ECO:0007669"/>
    <property type="project" value="InterPro"/>
</dbReference>
<dbReference type="GO" id="GO:0006412">
    <property type="term" value="P:translation"/>
    <property type="evidence" value="ECO:0007669"/>
    <property type="project" value="UniProtKB-UniRule"/>
</dbReference>
<dbReference type="CDD" id="cd00427">
    <property type="entry name" value="Ribosomal_L29_HIP"/>
    <property type="match status" value="1"/>
</dbReference>
<dbReference type="FunFam" id="1.10.287.310:FF:000001">
    <property type="entry name" value="50S ribosomal protein L29"/>
    <property type="match status" value="1"/>
</dbReference>
<dbReference type="Gene3D" id="1.10.287.310">
    <property type="match status" value="1"/>
</dbReference>
<dbReference type="HAMAP" id="MF_00374">
    <property type="entry name" value="Ribosomal_uL29"/>
    <property type="match status" value="1"/>
</dbReference>
<dbReference type="InterPro" id="IPR050063">
    <property type="entry name" value="Ribosomal_protein_uL29"/>
</dbReference>
<dbReference type="InterPro" id="IPR001854">
    <property type="entry name" value="Ribosomal_uL29"/>
</dbReference>
<dbReference type="InterPro" id="IPR018254">
    <property type="entry name" value="Ribosomal_uL29_CS"/>
</dbReference>
<dbReference type="InterPro" id="IPR036049">
    <property type="entry name" value="Ribosomal_uL29_sf"/>
</dbReference>
<dbReference type="NCBIfam" id="TIGR00012">
    <property type="entry name" value="L29"/>
    <property type="match status" value="1"/>
</dbReference>
<dbReference type="PANTHER" id="PTHR10916">
    <property type="entry name" value="60S RIBOSOMAL PROTEIN L35/50S RIBOSOMAL PROTEIN L29"/>
    <property type="match status" value="1"/>
</dbReference>
<dbReference type="PANTHER" id="PTHR10916:SF0">
    <property type="entry name" value="LARGE RIBOSOMAL SUBUNIT PROTEIN UL29C"/>
    <property type="match status" value="1"/>
</dbReference>
<dbReference type="Pfam" id="PF00831">
    <property type="entry name" value="Ribosomal_L29"/>
    <property type="match status" value="1"/>
</dbReference>
<dbReference type="SUPFAM" id="SSF46561">
    <property type="entry name" value="Ribosomal protein L29 (L29p)"/>
    <property type="match status" value="1"/>
</dbReference>
<dbReference type="PROSITE" id="PS00579">
    <property type="entry name" value="RIBOSOMAL_L29"/>
    <property type="match status" value="1"/>
</dbReference>
<organism>
    <name type="scientific">Streptococcus thermophilus (strain CNRZ 1066)</name>
    <dbReference type="NCBI Taxonomy" id="299768"/>
    <lineage>
        <taxon>Bacteria</taxon>
        <taxon>Bacillati</taxon>
        <taxon>Bacillota</taxon>
        <taxon>Bacilli</taxon>
        <taxon>Lactobacillales</taxon>
        <taxon>Streptococcaceae</taxon>
        <taxon>Streptococcus</taxon>
    </lineage>
</organism>
<reference key="1">
    <citation type="journal article" date="2004" name="Nat. Biotechnol.">
        <title>Complete sequence and comparative genome analysis of the dairy bacterium Streptococcus thermophilus.</title>
        <authorList>
            <person name="Bolotin A."/>
            <person name="Quinquis B."/>
            <person name="Renault P."/>
            <person name="Sorokin A."/>
            <person name="Ehrlich S.D."/>
            <person name="Kulakauskas S."/>
            <person name="Lapidus A."/>
            <person name="Goltsman E."/>
            <person name="Mazur M."/>
            <person name="Pusch G.D."/>
            <person name="Fonstein M."/>
            <person name="Overbeek R."/>
            <person name="Kyprides N."/>
            <person name="Purnelle B."/>
            <person name="Prozzi D."/>
            <person name="Ngui K."/>
            <person name="Masuy D."/>
            <person name="Hancy F."/>
            <person name="Burteau S."/>
            <person name="Boutry M."/>
            <person name="Delcour J."/>
            <person name="Goffeau A."/>
            <person name="Hols P."/>
        </authorList>
    </citation>
    <scope>NUCLEOTIDE SEQUENCE [LARGE SCALE GENOMIC DNA]</scope>
    <source>
        <strain>CNRZ 1066</strain>
    </source>
</reference>
<gene>
    <name evidence="1" type="primary">rpmC</name>
    <name type="ordered locus">str1926</name>
</gene>
<sequence>MKLEEIKKFVAELRGLSQEELAKKENELKKELFDLRFQAAAGQLDQTARLNEVKKQIARIKTVQSEIK</sequence>
<comment type="similarity">
    <text evidence="1">Belongs to the universal ribosomal protein uL29 family.</text>
</comment>
<protein>
    <recommendedName>
        <fullName evidence="1">Large ribosomal subunit protein uL29</fullName>
    </recommendedName>
    <alternativeName>
        <fullName evidence="2">50S ribosomal protein L29</fullName>
    </alternativeName>
</protein>
<keyword id="KW-0687">Ribonucleoprotein</keyword>
<keyword id="KW-0689">Ribosomal protein</keyword>
<evidence type="ECO:0000255" key="1">
    <source>
        <dbReference type="HAMAP-Rule" id="MF_00374"/>
    </source>
</evidence>
<evidence type="ECO:0000305" key="2"/>
<proteinExistence type="inferred from homology"/>
<accession>Q5LXR9</accession>